<reference key="1">
    <citation type="journal article" date="2010" name="Genome Biol. Evol.">
        <title>Continuing evolution of Burkholderia mallei through genome reduction and large-scale rearrangements.</title>
        <authorList>
            <person name="Losada L."/>
            <person name="Ronning C.M."/>
            <person name="DeShazer D."/>
            <person name="Woods D."/>
            <person name="Fedorova N."/>
            <person name="Kim H.S."/>
            <person name="Shabalina S.A."/>
            <person name="Pearson T.R."/>
            <person name="Brinkac L."/>
            <person name="Tan P."/>
            <person name="Nandi T."/>
            <person name="Crabtree J."/>
            <person name="Badger J."/>
            <person name="Beckstrom-Sternberg S."/>
            <person name="Saqib M."/>
            <person name="Schutzer S.E."/>
            <person name="Keim P."/>
            <person name="Nierman W.C."/>
        </authorList>
    </citation>
    <scope>NUCLEOTIDE SEQUENCE [LARGE SCALE GENOMIC DNA]</scope>
    <source>
        <strain>NCTC 10247</strain>
    </source>
</reference>
<keyword id="KW-0963">Cytoplasm</keyword>
<keyword id="KW-0378">Hydrolase</keyword>
<keyword id="KW-0479">Metal-binding</keyword>
<keyword id="KW-0533">Nickel</keyword>
<organism>
    <name type="scientific">Burkholderia mallei (strain NCTC 10247)</name>
    <dbReference type="NCBI Taxonomy" id="320389"/>
    <lineage>
        <taxon>Bacteria</taxon>
        <taxon>Pseudomonadati</taxon>
        <taxon>Pseudomonadota</taxon>
        <taxon>Betaproteobacteria</taxon>
        <taxon>Burkholderiales</taxon>
        <taxon>Burkholderiaceae</taxon>
        <taxon>Burkholderia</taxon>
        <taxon>pseudomallei group</taxon>
    </lineage>
</organism>
<name>URE1_BURM7</name>
<gene>
    <name evidence="1" type="primary">ureC</name>
    <name type="ordered locus">BMA10247_2057</name>
</gene>
<accession>A3MMV2</accession>
<protein>
    <recommendedName>
        <fullName evidence="1">Urease subunit alpha</fullName>
        <ecNumber evidence="1">3.5.1.5</ecNumber>
    </recommendedName>
    <alternativeName>
        <fullName evidence="1">Urea amidohydrolase subunit alpha</fullName>
    </alternativeName>
</protein>
<evidence type="ECO:0000255" key="1">
    <source>
        <dbReference type="HAMAP-Rule" id="MF_01953"/>
    </source>
</evidence>
<sequence>MTLRLSRRAYAEMYGPTTGDRIRLADTELLIEVERDHTLYGEEVKFGGGKVIRDGMGQSQLPAADVADTVITNAVILDHWGIVKADIAIKHGRIAAIGKAGNPDIQPGVTIAIGAATEIIAGEGLIVTAGGIDTHIHFISPQQIDEALASGVTTMIGGGTGPATGTNATTCTPGPWHMERMLQAADGWPINLGFLGKGNASRPQPLVEQIEAGAIGLKLHEDWGTTPAAIDNCLTVADDTDTQVAIHTDTLNEAGFVEATVAAFKGRTIHTYHTEGAGGGHAPDILKVCGEANVLPSSTNPTRPYTINTLDEHLDMLMVCHHLDPSIAEDLAFAESRIRRETIAAEDILHDLGALSMLSSDSQAMGRVGEVIIRTWQTAHKMKVQRGALAGDGARNDNFRAKRYVAKYTINPALTHGIAHEVGSIEPGKWADLVLWEPAFFGVKPAMIVKGGMIAVAQMGDPNASIPTPQPVHYREMFATRGGALARTSLTFVSQLALDAGIGARYGLAKRLVPVRGCRTVTKRDMIHNAWQPAIRVDPETYDVVADGALLTCEPAAVLPMAQRYFLF</sequence>
<dbReference type="EC" id="3.5.1.5" evidence="1"/>
<dbReference type="EMBL" id="CP000548">
    <property type="protein sequence ID" value="ABO04242.1"/>
    <property type="molecule type" value="Genomic_DNA"/>
</dbReference>
<dbReference type="RefSeq" id="WP_004186033.1">
    <property type="nucleotide sequence ID" value="NZ_CP007802.1"/>
</dbReference>
<dbReference type="SMR" id="A3MMV2"/>
<dbReference type="GeneID" id="92979887"/>
<dbReference type="KEGG" id="bmaz:BM44_1170"/>
<dbReference type="KEGG" id="bmn:BMA10247_2057"/>
<dbReference type="PATRIC" id="fig|320389.8.peg.1306"/>
<dbReference type="UniPathway" id="UPA00258">
    <property type="reaction ID" value="UER00370"/>
</dbReference>
<dbReference type="GO" id="GO:0005737">
    <property type="term" value="C:cytoplasm"/>
    <property type="evidence" value="ECO:0007669"/>
    <property type="project" value="UniProtKB-SubCell"/>
</dbReference>
<dbReference type="GO" id="GO:0016151">
    <property type="term" value="F:nickel cation binding"/>
    <property type="evidence" value="ECO:0007669"/>
    <property type="project" value="UniProtKB-UniRule"/>
</dbReference>
<dbReference type="GO" id="GO:0009039">
    <property type="term" value="F:urease activity"/>
    <property type="evidence" value="ECO:0007669"/>
    <property type="project" value="UniProtKB-UniRule"/>
</dbReference>
<dbReference type="GO" id="GO:0043419">
    <property type="term" value="P:urea catabolic process"/>
    <property type="evidence" value="ECO:0007669"/>
    <property type="project" value="UniProtKB-UniRule"/>
</dbReference>
<dbReference type="CDD" id="cd00375">
    <property type="entry name" value="Urease_alpha"/>
    <property type="match status" value="1"/>
</dbReference>
<dbReference type="Gene3D" id="3.20.20.140">
    <property type="entry name" value="Metal-dependent hydrolases"/>
    <property type="match status" value="1"/>
</dbReference>
<dbReference type="Gene3D" id="2.30.40.10">
    <property type="entry name" value="Urease, subunit C, domain 1"/>
    <property type="match status" value="1"/>
</dbReference>
<dbReference type="HAMAP" id="MF_01953">
    <property type="entry name" value="Urease_alpha"/>
    <property type="match status" value="1"/>
</dbReference>
<dbReference type="InterPro" id="IPR006680">
    <property type="entry name" value="Amidohydro-rel"/>
</dbReference>
<dbReference type="InterPro" id="IPR011059">
    <property type="entry name" value="Metal-dep_hydrolase_composite"/>
</dbReference>
<dbReference type="InterPro" id="IPR032466">
    <property type="entry name" value="Metal_Hydrolase"/>
</dbReference>
<dbReference type="InterPro" id="IPR011612">
    <property type="entry name" value="Urease_alpha_N_dom"/>
</dbReference>
<dbReference type="InterPro" id="IPR050112">
    <property type="entry name" value="Urease_alpha_subunit"/>
</dbReference>
<dbReference type="InterPro" id="IPR017950">
    <property type="entry name" value="Urease_AS"/>
</dbReference>
<dbReference type="InterPro" id="IPR005848">
    <property type="entry name" value="Urease_asu"/>
</dbReference>
<dbReference type="InterPro" id="IPR017951">
    <property type="entry name" value="Urease_asu_c"/>
</dbReference>
<dbReference type="InterPro" id="IPR029754">
    <property type="entry name" value="Urease_Ni-bd"/>
</dbReference>
<dbReference type="NCBIfam" id="NF009685">
    <property type="entry name" value="PRK13206.1"/>
    <property type="match status" value="1"/>
</dbReference>
<dbReference type="NCBIfam" id="NF009686">
    <property type="entry name" value="PRK13207.1"/>
    <property type="match status" value="1"/>
</dbReference>
<dbReference type="NCBIfam" id="TIGR01792">
    <property type="entry name" value="urease_alph"/>
    <property type="match status" value="1"/>
</dbReference>
<dbReference type="PANTHER" id="PTHR43440">
    <property type="entry name" value="UREASE"/>
    <property type="match status" value="1"/>
</dbReference>
<dbReference type="PANTHER" id="PTHR43440:SF1">
    <property type="entry name" value="UREASE"/>
    <property type="match status" value="1"/>
</dbReference>
<dbReference type="Pfam" id="PF01979">
    <property type="entry name" value="Amidohydro_1"/>
    <property type="match status" value="1"/>
</dbReference>
<dbReference type="Pfam" id="PF00449">
    <property type="entry name" value="Urease_alpha"/>
    <property type="match status" value="1"/>
</dbReference>
<dbReference type="PRINTS" id="PR01752">
    <property type="entry name" value="UREASE"/>
</dbReference>
<dbReference type="SUPFAM" id="SSF51338">
    <property type="entry name" value="Composite domain of metallo-dependent hydrolases"/>
    <property type="match status" value="2"/>
</dbReference>
<dbReference type="SUPFAM" id="SSF51556">
    <property type="entry name" value="Metallo-dependent hydrolases"/>
    <property type="match status" value="1"/>
</dbReference>
<dbReference type="PROSITE" id="PS01120">
    <property type="entry name" value="UREASE_1"/>
    <property type="match status" value="1"/>
</dbReference>
<dbReference type="PROSITE" id="PS00145">
    <property type="entry name" value="UREASE_2"/>
    <property type="match status" value="1"/>
</dbReference>
<dbReference type="PROSITE" id="PS51368">
    <property type="entry name" value="UREASE_3"/>
    <property type="match status" value="1"/>
</dbReference>
<proteinExistence type="inferred from homology"/>
<comment type="catalytic activity">
    <reaction evidence="1">
        <text>urea + 2 H2O + H(+) = hydrogencarbonate + 2 NH4(+)</text>
        <dbReference type="Rhea" id="RHEA:20557"/>
        <dbReference type="ChEBI" id="CHEBI:15377"/>
        <dbReference type="ChEBI" id="CHEBI:15378"/>
        <dbReference type="ChEBI" id="CHEBI:16199"/>
        <dbReference type="ChEBI" id="CHEBI:17544"/>
        <dbReference type="ChEBI" id="CHEBI:28938"/>
        <dbReference type="EC" id="3.5.1.5"/>
    </reaction>
</comment>
<comment type="cofactor">
    <cofactor evidence="1">
        <name>Ni cation</name>
        <dbReference type="ChEBI" id="CHEBI:25516"/>
    </cofactor>
    <text evidence="1">Binds 2 nickel ions per subunit.</text>
</comment>
<comment type="pathway">
    <text evidence="1">Nitrogen metabolism; urea degradation; CO(2) and NH(3) from urea (urease route): step 1/1.</text>
</comment>
<comment type="subunit">
    <text evidence="1">Heterotrimer of UreA (gamma), UreB (beta) and UreC (alpha) subunits. Three heterotrimers associate to form the active enzyme.</text>
</comment>
<comment type="subcellular location">
    <subcellularLocation>
        <location evidence="1">Cytoplasm</location>
    </subcellularLocation>
</comment>
<comment type="PTM">
    <text evidence="1">Carboxylation allows a single lysine to coordinate two nickel ions.</text>
</comment>
<comment type="similarity">
    <text evidence="1">Belongs to the metallo-dependent hydrolases superfamily. Urease alpha subunit family.</text>
</comment>
<feature type="chain" id="PRO_1000070649" description="Urease subunit alpha">
    <location>
        <begin position="1"/>
        <end position="568"/>
    </location>
</feature>
<feature type="domain" description="Urease" evidence="1">
    <location>
        <begin position="130"/>
        <end position="568"/>
    </location>
</feature>
<feature type="active site" description="Proton donor" evidence="1">
    <location>
        <position position="321"/>
    </location>
</feature>
<feature type="binding site" evidence="1">
    <location>
        <position position="135"/>
    </location>
    <ligand>
        <name>Ni(2+)</name>
        <dbReference type="ChEBI" id="CHEBI:49786"/>
        <label>1</label>
    </ligand>
</feature>
<feature type="binding site" evidence="1">
    <location>
        <position position="137"/>
    </location>
    <ligand>
        <name>Ni(2+)</name>
        <dbReference type="ChEBI" id="CHEBI:49786"/>
        <label>1</label>
    </ligand>
</feature>
<feature type="binding site" description="via carbamate group" evidence="1">
    <location>
        <position position="218"/>
    </location>
    <ligand>
        <name>Ni(2+)</name>
        <dbReference type="ChEBI" id="CHEBI:49786"/>
        <label>1</label>
    </ligand>
</feature>
<feature type="binding site" description="via carbamate group" evidence="1">
    <location>
        <position position="218"/>
    </location>
    <ligand>
        <name>Ni(2+)</name>
        <dbReference type="ChEBI" id="CHEBI:49786"/>
        <label>2</label>
    </ligand>
</feature>
<feature type="binding site" evidence="1">
    <location>
        <position position="220"/>
    </location>
    <ligand>
        <name>substrate</name>
    </ligand>
</feature>
<feature type="binding site" evidence="1">
    <location>
        <position position="247"/>
    </location>
    <ligand>
        <name>Ni(2+)</name>
        <dbReference type="ChEBI" id="CHEBI:49786"/>
        <label>2</label>
    </ligand>
</feature>
<feature type="binding site" evidence="1">
    <location>
        <position position="273"/>
    </location>
    <ligand>
        <name>Ni(2+)</name>
        <dbReference type="ChEBI" id="CHEBI:49786"/>
        <label>2</label>
    </ligand>
</feature>
<feature type="binding site" evidence="1">
    <location>
        <position position="361"/>
    </location>
    <ligand>
        <name>Ni(2+)</name>
        <dbReference type="ChEBI" id="CHEBI:49786"/>
        <label>1</label>
    </ligand>
</feature>
<feature type="modified residue" description="N6-carboxylysine" evidence="1">
    <location>
        <position position="218"/>
    </location>
</feature>